<comment type="function">
    <text evidence="1">Hydrolyzes ribosome-free peptidyl-tRNAs (with 1 or more amino acids incorporated), which drop off the ribosome during protein synthesis, or as a result of ribosome stalling.</text>
</comment>
<comment type="function">
    <text evidence="1">Catalyzes the release of premature peptidyl moieties from peptidyl-tRNA molecules trapped in stalled 50S ribosomal subunits, and thus maintains levels of free tRNAs and 50S ribosomes.</text>
</comment>
<comment type="catalytic activity">
    <reaction evidence="1">
        <text>an N-acyl-L-alpha-aminoacyl-tRNA + H2O = an N-acyl-L-amino acid + a tRNA + H(+)</text>
        <dbReference type="Rhea" id="RHEA:54448"/>
        <dbReference type="Rhea" id="RHEA-COMP:10123"/>
        <dbReference type="Rhea" id="RHEA-COMP:13883"/>
        <dbReference type="ChEBI" id="CHEBI:15377"/>
        <dbReference type="ChEBI" id="CHEBI:15378"/>
        <dbReference type="ChEBI" id="CHEBI:59874"/>
        <dbReference type="ChEBI" id="CHEBI:78442"/>
        <dbReference type="ChEBI" id="CHEBI:138191"/>
        <dbReference type="EC" id="3.1.1.29"/>
    </reaction>
</comment>
<comment type="subunit">
    <text evidence="1">Monomer.</text>
</comment>
<comment type="subcellular location">
    <subcellularLocation>
        <location evidence="1">Cytoplasm</location>
    </subcellularLocation>
</comment>
<comment type="similarity">
    <text evidence="1">Belongs to the PTH family.</text>
</comment>
<feature type="chain" id="PRO_1000010659" description="Peptidyl-tRNA hydrolase">
    <location>
        <begin position="1"/>
        <end position="189"/>
    </location>
</feature>
<feature type="active site" description="Proton acceptor" evidence="1">
    <location>
        <position position="20"/>
    </location>
</feature>
<feature type="binding site" evidence="1">
    <location>
        <position position="15"/>
    </location>
    <ligand>
        <name>tRNA</name>
        <dbReference type="ChEBI" id="CHEBI:17843"/>
    </ligand>
</feature>
<feature type="binding site" evidence="1">
    <location>
        <position position="66"/>
    </location>
    <ligand>
        <name>tRNA</name>
        <dbReference type="ChEBI" id="CHEBI:17843"/>
    </ligand>
</feature>
<feature type="binding site" evidence="1">
    <location>
        <position position="68"/>
    </location>
    <ligand>
        <name>tRNA</name>
        <dbReference type="ChEBI" id="CHEBI:17843"/>
    </ligand>
</feature>
<feature type="binding site" evidence="1">
    <location>
        <position position="114"/>
    </location>
    <ligand>
        <name>tRNA</name>
        <dbReference type="ChEBI" id="CHEBI:17843"/>
    </ligand>
</feature>
<feature type="site" description="Discriminates between blocked and unblocked aminoacyl-tRNA" evidence="1">
    <location>
        <position position="10"/>
    </location>
</feature>
<feature type="site" description="Stabilizes the basic form of H active site to accept a proton" evidence="1">
    <location>
        <position position="93"/>
    </location>
</feature>
<sequence length="189" mass="21259">MTRLIIGLGNPGDRYFETKHNVGFMLLDKIAKRENVTFNHDKIFQADIATTFIDGEKIYLVKPTTFMNESGKAVHALMTYYGLDATDILVAYDDLDMAVGKIRFRQKGSAGGHNGIKSIVKHIGTQEFDRIKIGIGRPKGKMSVVNHVLSGFDIEDRIEIDLALDKLDKAVNVYLEEDDFDTVMRKFNG</sequence>
<organism>
    <name type="scientific">Streptococcus suis (strain 05ZYH33)</name>
    <dbReference type="NCBI Taxonomy" id="391295"/>
    <lineage>
        <taxon>Bacteria</taxon>
        <taxon>Bacillati</taxon>
        <taxon>Bacillota</taxon>
        <taxon>Bacilli</taxon>
        <taxon>Lactobacillales</taxon>
        <taxon>Streptococcaceae</taxon>
        <taxon>Streptococcus</taxon>
    </lineage>
</organism>
<gene>
    <name evidence="1" type="primary">pth</name>
    <name type="ordered locus">SSU05_0007</name>
</gene>
<reference key="1">
    <citation type="journal article" date="2007" name="PLoS ONE">
        <title>A glimpse of streptococcal toxic shock syndrome from comparative genomics of S. suis 2 Chinese isolates.</title>
        <authorList>
            <person name="Chen C."/>
            <person name="Tang J."/>
            <person name="Dong W."/>
            <person name="Wang C."/>
            <person name="Feng Y."/>
            <person name="Wang J."/>
            <person name="Zheng F."/>
            <person name="Pan X."/>
            <person name="Liu D."/>
            <person name="Li M."/>
            <person name="Song Y."/>
            <person name="Zhu X."/>
            <person name="Sun H."/>
            <person name="Feng T."/>
            <person name="Guo Z."/>
            <person name="Ju A."/>
            <person name="Ge J."/>
            <person name="Dong Y."/>
            <person name="Sun W."/>
            <person name="Jiang Y."/>
            <person name="Wang J."/>
            <person name="Yan J."/>
            <person name="Yang H."/>
            <person name="Wang X."/>
            <person name="Gao G.F."/>
            <person name="Yang R."/>
            <person name="Wang J."/>
            <person name="Yu J."/>
        </authorList>
    </citation>
    <scope>NUCLEOTIDE SEQUENCE [LARGE SCALE GENOMIC DNA]</scope>
    <source>
        <strain>05ZYH33</strain>
    </source>
</reference>
<protein>
    <recommendedName>
        <fullName evidence="1">Peptidyl-tRNA hydrolase</fullName>
        <shortName evidence="1">Pth</shortName>
        <ecNumber evidence="1">3.1.1.29</ecNumber>
    </recommendedName>
</protein>
<dbReference type="EC" id="3.1.1.29" evidence="1"/>
<dbReference type="EMBL" id="CP000407">
    <property type="protein sequence ID" value="ABP88981.1"/>
    <property type="molecule type" value="Genomic_DNA"/>
</dbReference>
<dbReference type="SMR" id="A4VS92"/>
<dbReference type="STRING" id="391295.SSU05_0007"/>
<dbReference type="KEGG" id="ssu:SSU05_0007"/>
<dbReference type="eggNOG" id="COG0193">
    <property type="taxonomic scope" value="Bacteria"/>
</dbReference>
<dbReference type="HOGENOM" id="CLU_062456_4_1_9"/>
<dbReference type="GO" id="GO:0005737">
    <property type="term" value="C:cytoplasm"/>
    <property type="evidence" value="ECO:0007669"/>
    <property type="project" value="UniProtKB-SubCell"/>
</dbReference>
<dbReference type="GO" id="GO:0004045">
    <property type="term" value="F:peptidyl-tRNA hydrolase activity"/>
    <property type="evidence" value="ECO:0007669"/>
    <property type="project" value="UniProtKB-UniRule"/>
</dbReference>
<dbReference type="GO" id="GO:0000049">
    <property type="term" value="F:tRNA binding"/>
    <property type="evidence" value="ECO:0007669"/>
    <property type="project" value="UniProtKB-UniRule"/>
</dbReference>
<dbReference type="GO" id="GO:0006515">
    <property type="term" value="P:protein quality control for misfolded or incompletely synthesized proteins"/>
    <property type="evidence" value="ECO:0007669"/>
    <property type="project" value="UniProtKB-UniRule"/>
</dbReference>
<dbReference type="GO" id="GO:0072344">
    <property type="term" value="P:rescue of stalled ribosome"/>
    <property type="evidence" value="ECO:0007669"/>
    <property type="project" value="UniProtKB-UniRule"/>
</dbReference>
<dbReference type="CDD" id="cd00462">
    <property type="entry name" value="PTH"/>
    <property type="match status" value="1"/>
</dbReference>
<dbReference type="FunFam" id="3.40.50.1470:FF:000001">
    <property type="entry name" value="Peptidyl-tRNA hydrolase"/>
    <property type="match status" value="1"/>
</dbReference>
<dbReference type="Gene3D" id="3.40.50.1470">
    <property type="entry name" value="Peptidyl-tRNA hydrolase"/>
    <property type="match status" value="1"/>
</dbReference>
<dbReference type="HAMAP" id="MF_00083">
    <property type="entry name" value="Pept_tRNA_hydro_bact"/>
    <property type="match status" value="1"/>
</dbReference>
<dbReference type="InterPro" id="IPR001328">
    <property type="entry name" value="Pept_tRNA_hydro"/>
</dbReference>
<dbReference type="InterPro" id="IPR018171">
    <property type="entry name" value="Pept_tRNA_hydro_CS"/>
</dbReference>
<dbReference type="InterPro" id="IPR036416">
    <property type="entry name" value="Pept_tRNA_hydro_sf"/>
</dbReference>
<dbReference type="NCBIfam" id="TIGR00447">
    <property type="entry name" value="pth"/>
    <property type="match status" value="1"/>
</dbReference>
<dbReference type="PANTHER" id="PTHR17224">
    <property type="entry name" value="PEPTIDYL-TRNA HYDROLASE"/>
    <property type="match status" value="1"/>
</dbReference>
<dbReference type="PANTHER" id="PTHR17224:SF1">
    <property type="entry name" value="PEPTIDYL-TRNA HYDROLASE"/>
    <property type="match status" value="1"/>
</dbReference>
<dbReference type="Pfam" id="PF01195">
    <property type="entry name" value="Pept_tRNA_hydro"/>
    <property type="match status" value="1"/>
</dbReference>
<dbReference type="SUPFAM" id="SSF53178">
    <property type="entry name" value="Peptidyl-tRNA hydrolase-like"/>
    <property type="match status" value="1"/>
</dbReference>
<dbReference type="PROSITE" id="PS01195">
    <property type="entry name" value="PEPT_TRNA_HYDROL_1"/>
    <property type="match status" value="1"/>
</dbReference>
<dbReference type="PROSITE" id="PS01196">
    <property type="entry name" value="PEPT_TRNA_HYDROL_2"/>
    <property type="match status" value="1"/>
</dbReference>
<evidence type="ECO:0000255" key="1">
    <source>
        <dbReference type="HAMAP-Rule" id="MF_00083"/>
    </source>
</evidence>
<proteinExistence type="inferred from homology"/>
<name>PTH_STRSY</name>
<accession>A4VS92</accession>
<keyword id="KW-0963">Cytoplasm</keyword>
<keyword id="KW-0378">Hydrolase</keyword>
<keyword id="KW-0694">RNA-binding</keyword>
<keyword id="KW-0820">tRNA-binding</keyword>